<proteinExistence type="inferred from homology"/>
<gene>
    <name type="primary">pcaB</name>
    <name type="ordered locus">blr5667</name>
</gene>
<reference key="1">
    <citation type="journal article" date="1998" name="Biochim. Biophys. Acta">
        <title>Characterization of Bradyrhizobium japonicum pcaBDC genes involved in 4-hydroxybenzoate degradation.</title>
        <authorList>
            <person name="Lorite M.J."/>
            <person name="Sanjuan J."/>
            <person name="Velasco L."/>
            <person name="Olivares J."/>
            <person name="Bedmar E.J."/>
        </authorList>
    </citation>
    <scope>NUCLEOTIDE SEQUENCE [GENOMIC DNA]</scope>
    <source>
        <strain>JCM 10833 / BCRC 13528 / IAM 13628 / NBRC 14792 / USDA 110</strain>
    </source>
</reference>
<reference key="2">
    <citation type="journal article" date="2002" name="DNA Res.">
        <title>Complete genomic sequence of nitrogen-fixing symbiotic bacterium Bradyrhizobium japonicum USDA110.</title>
        <authorList>
            <person name="Kaneko T."/>
            <person name="Nakamura Y."/>
            <person name="Sato S."/>
            <person name="Minamisawa K."/>
            <person name="Uchiumi T."/>
            <person name="Sasamoto S."/>
            <person name="Watanabe A."/>
            <person name="Idesawa K."/>
            <person name="Iriguchi M."/>
            <person name="Kawashima K."/>
            <person name="Kohara M."/>
            <person name="Matsumoto M."/>
            <person name="Shimpo S."/>
            <person name="Tsuruoka H."/>
            <person name="Wada T."/>
            <person name="Yamada M."/>
            <person name="Tabata S."/>
        </authorList>
    </citation>
    <scope>NUCLEOTIDE SEQUENCE [LARGE SCALE GENOMIC DNA]</scope>
    <source>
        <strain>JCM 10833 / BCRC 13528 / IAM 13628 / NBRC 14792 / USDA 110</strain>
    </source>
</reference>
<accession>O31385</accession>
<name>PCAB_BRADU</name>
<sequence length="451" mass="47238">MSTALSPLLAPMLSSAAMRAACDDRSTLQNMLDFEAALARAEAATGVIPAAAVGPIETACKAATFDIAALAEAATRSGNLAIPLVKALTANVAKADAEAARYVHWGATSQDVIDTATMLTLRAAIDALDADLSRAIKGFAALARNHRNTAMVARTWLQHALPMPFGLKAAEYAASLARARCRLRRLSRDGLALQFGGAAGTLAALGDKGLVVAERLAQELNLPLPEAPWHTHRDRIAEAASALAILAGSCGKIARDVSLMMQTDVAEAFEPAGEGRGGSSTMPHKRNPVAAASALGCATMAPQLAATIFAAQVQDHERSAGPWHAEWPTLPQLMLVTSGALAAIVDIAEGLDVDAARMRSNLDATHGLIMAEAVTFALAERIGKSDAHHLIEAASKRAVAEKKHLREVLAADSQVTAHLSPEKIAALFEPMAYQGASQAMIDRLLDSLERD</sequence>
<feature type="chain" id="PRO_0000161348" description="3-carboxy-cis,cis-muconate cycloisomerase">
    <location>
        <begin position="1"/>
        <end position="451"/>
    </location>
</feature>
<comment type="function">
    <text>Catalyzes an anti cycloisomerization.</text>
</comment>
<comment type="catalytic activity">
    <reaction>
        <text>2-(carboxymethyl)-5-oxo-2,5-dihydro-2-furoate = 3-carboxy-cis,cis-muconate + H(+)</text>
        <dbReference type="Rhea" id="RHEA:23656"/>
        <dbReference type="ChEBI" id="CHEBI:15378"/>
        <dbReference type="ChEBI" id="CHEBI:57496"/>
        <dbReference type="ChEBI" id="CHEBI:57979"/>
        <dbReference type="EC" id="5.5.1.2"/>
    </reaction>
</comment>
<comment type="similarity">
    <text evidence="1">Belongs to the class-II fumarase/aspartase family.</text>
</comment>
<dbReference type="EC" id="5.5.1.2"/>
<dbReference type="EMBL" id="Y10223">
    <property type="protein sequence ID" value="CAA71270.1"/>
    <property type="molecule type" value="Genomic_DNA"/>
</dbReference>
<dbReference type="EMBL" id="BA000040">
    <property type="protein sequence ID" value="BAC50932.1"/>
    <property type="molecule type" value="Genomic_DNA"/>
</dbReference>
<dbReference type="RefSeq" id="NP_772307.1">
    <property type="nucleotide sequence ID" value="NC_004463.1"/>
</dbReference>
<dbReference type="RefSeq" id="WP_011088413.1">
    <property type="nucleotide sequence ID" value="NC_004463.1"/>
</dbReference>
<dbReference type="SMR" id="O31385"/>
<dbReference type="FunCoup" id="O31385">
    <property type="interactions" value="719"/>
</dbReference>
<dbReference type="STRING" id="224911.AAV28_25835"/>
<dbReference type="EnsemblBacteria" id="BAC50932">
    <property type="protein sequence ID" value="BAC50932"/>
    <property type="gene ID" value="BAC50932"/>
</dbReference>
<dbReference type="KEGG" id="bja:blr5667"/>
<dbReference type="PATRIC" id="fig|224911.5.peg.5776"/>
<dbReference type="eggNOG" id="COG0015">
    <property type="taxonomic scope" value="Bacteria"/>
</dbReference>
<dbReference type="HOGENOM" id="CLU_030949_3_3_5"/>
<dbReference type="InParanoid" id="O31385"/>
<dbReference type="OrthoDB" id="9768878at2"/>
<dbReference type="PhylomeDB" id="O31385"/>
<dbReference type="Proteomes" id="UP000002526">
    <property type="component" value="Chromosome"/>
</dbReference>
<dbReference type="GO" id="GO:0047472">
    <property type="term" value="F:3-carboxy-cis,cis-muconate cycloisomerase activity"/>
    <property type="evidence" value="ECO:0007669"/>
    <property type="project" value="UniProtKB-EC"/>
</dbReference>
<dbReference type="GO" id="GO:0016829">
    <property type="term" value="F:lyase activity"/>
    <property type="evidence" value="ECO:0007669"/>
    <property type="project" value="UniProtKB-ARBA"/>
</dbReference>
<dbReference type="GO" id="GO:0019619">
    <property type="term" value="P:3,4-dihydroxybenzoate catabolic process"/>
    <property type="evidence" value="ECO:0007669"/>
    <property type="project" value="InterPro"/>
</dbReference>
<dbReference type="CDD" id="cd01597">
    <property type="entry name" value="pCLME"/>
    <property type="match status" value="1"/>
</dbReference>
<dbReference type="Gene3D" id="1.10.40.30">
    <property type="entry name" value="Fumarase/aspartase (C-terminal domain)"/>
    <property type="match status" value="1"/>
</dbReference>
<dbReference type="Gene3D" id="1.20.200.10">
    <property type="entry name" value="Fumarase/aspartase (Central domain)"/>
    <property type="match status" value="1"/>
</dbReference>
<dbReference type="InterPro" id="IPR019468">
    <property type="entry name" value="AdenyloSucc_lyase_C"/>
</dbReference>
<dbReference type="InterPro" id="IPR020557">
    <property type="entry name" value="Fumarate_lyase_CS"/>
</dbReference>
<dbReference type="InterPro" id="IPR000362">
    <property type="entry name" value="Fumarate_lyase_fam"/>
</dbReference>
<dbReference type="InterPro" id="IPR022761">
    <property type="entry name" value="Fumarate_lyase_N"/>
</dbReference>
<dbReference type="InterPro" id="IPR008948">
    <property type="entry name" value="L-Aspartase-like"/>
</dbReference>
<dbReference type="InterPro" id="IPR012789">
    <property type="entry name" value="Protocat_PcaB-like"/>
</dbReference>
<dbReference type="NCBIfam" id="NF006554">
    <property type="entry name" value="PRK09053.1"/>
    <property type="match status" value="1"/>
</dbReference>
<dbReference type="NCBIfam" id="TIGR02426">
    <property type="entry name" value="protocat_pcaB"/>
    <property type="match status" value="1"/>
</dbReference>
<dbReference type="PANTHER" id="PTHR43172">
    <property type="entry name" value="ADENYLOSUCCINATE LYASE"/>
    <property type="match status" value="1"/>
</dbReference>
<dbReference type="PANTHER" id="PTHR43172:SF2">
    <property type="entry name" value="ADENYLOSUCCINATE LYASE C-TERMINAL DOMAIN-CONTAINING PROTEIN"/>
    <property type="match status" value="1"/>
</dbReference>
<dbReference type="Pfam" id="PF10397">
    <property type="entry name" value="ADSL_C"/>
    <property type="match status" value="1"/>
</dbReference>
<dbReference type="Pfam" id="PF00206">
    <property type="entry name" value="Lyase_1"/>
    <property type="match status" value="1"/>
</dbReference>
<dbReference type="PRINTS" id="PR00145">
    <property type="entry name" value="ARGSUCLYASE"/>
</dbReference>
<dbReference type="PRINTS" id="PR00149">
    <property type="entry name" value="FUMRATELYASE"/>
</dbReference>
<dbReference type="SMART" id="SM00998">
    <property type="entry name" value="ADSL_C"/>
    <property type="match status" value="1"/>
</dbReference>
<dbReference type="SUPFAM" id="SSF48557">
    <property type="entry name" value="L-aspartase-like"/>
    <property type="match status" value="1"/>
</dbReference>
<dbReference type="PROSITE" id="PS00163">
    <property type="entry name" value="FUMARATE_LYASES"/>
    <property type="match status" value="1"/>
</dbReference>
<organism>
    <name type="scientific">Bradyrhizobium diazoefficiens (strain JCM 10833 / BCRC 13528 / IAM 13628 / NBRC 14792 / USDA 110)</name>
    <dbReference type="NCBI Taxonomy" id="224911"/>
    <lineage>
        <taxon>Bacteria</taxon>
        <taxon>Pseudomonadati</taxon>
        <taxon>Pseudomonadota</taxon>
        <taxon>Alphaproteobacteria</taxon>
        <taxon>Hyphomicrobiales</taxon>
        <taxon>Nitrobacteraceae</taxon>
        <taxon>Bradyrhizobium</taxon>
    </lineage>
</organism>
<protein>
    <recommendedName>
        <fullName>3-carboxy-cis,cis-muconate cycloisomerase</fullName>
        <ecNumber>5.5.1.2</ecNumber>
    </recommendedName>
    <alternativeName>
        <fullName>3-carboxymuconate lactonizing enzyme</fullName>
        <shortName>CMLE</shortName>
    </alternativeName>
</protein>
<keyword id="KW-0058">Aromatic hydrocarbons catabolism</keyword>
<keyword id="KW-0413">Isomerase</keyword>
<keyword id="KW-1185">Reference proteome</keyword>
<evidence type="ECO:0000305" key="1"/>